<organism>
    <name type="scientific">Mycobacterium tuberculosis (strain CDC 1551 / Oshkosh)</name>
    <dbReference type="NCBI Taxonomy" id="83331"/>
    <lineage>
        <taxon>Bacteria</taxon>
        <taxon>Bacillati</taxon>
        <taxon>Actinomycetota</taxon>
        <taxon>Actinomycetes</taxon>
        <taxon>Mycobacteriales</taxon>
        <taxon>Mycobacteriaceae</taxon>
        <taxon>Mycobacterium</taxon>
        <taxon>Mycobacterium tuberculosis complex</taxon>
    </lineage>
</organism>
<evidence type="ECO:0000255" key="1">
    <source>
        <dbReference type="HAMAP-Rule" id="MF_02114"/>
    </source>
</evidence>
<comment type="function">
    <text evidence="1">Guanylyltransferase that catalyzes the activation of phosphoenolpyruvate (PEP) as enolpyruvoyl-2-diphospho-5'-guanosine, via the condensation of PEP with GTP. It is involved in the biosynthesis of coenzyme F420, a hydride carrier cofactor.</text>
</comment>
<comment type="catalytic activity">
    <reaction evidence="1">
        <text>phosphoenolpyruvate + GTP + H(+) = enolpyruvoyl-2-diphospho-5'-guanosine + diphosphate</text>
        <dbReference type="Rhea" id="RHEA:30519"/>
        <dbReference type="ChEBI" id="CHEBI:15378"/>
        <dbReference type="ChEBI" id="CHEBI:33019"/>
        <dbReference type="ChEBI" id="CHEBI:37565"/>
        <dbReference type="ChEBI" id="CHEBI:58702"/>
        <dbReference type="ChEBI" id="CHEBI:143701"/>
        <dbReference type="EC" id="2.7.7.105"/>
    </reaction>
</comment>
<comment type="pathway">
    <text evidence="1">Cofactor biosynthesis; coenzyme F420 biosynthesis.</text>
</comment>
<comment type="similarity">
    <text evidence="1">Belongs to the CofC family.</text>
</comment>
<sequence length="214" mass="21819">MSGTPDDGDIGLIIAVKRLAAAKTRLAPVFSAQTRENVVLAMLVDTLTAAAGVGSLRSITVITPDEAAAAAAAGLGADVLADPTPEDDPDPLNTAITAAERVVAEGASNIVVLQGDLPALQTQELAEAISAARHHRRSFVADRLGTGTAVLCAFGTALHPRFGPDSSARHRRSGAVELTGAWPGLRCDVDTPADLTAARQLGVGPATARAVAHR</sequence>
<gene>
    <name evidence="1" type="primary">fbiD</name>
    <name type="ordered locus">MT3061</name>
</gene>
<keyword id="KW-0342">GTP-binding</keyword>
<keyword id="KW-0547">Nucleotide-binding</keyword>
<keyword id="KW-0548">Nucleotidyltransferase</keyword>
<keyword id="KW-1185">Reference proteome</keyword>
<keyword id="KW-0808">Transferase</keyword>
<proteinExistence type="inferred from homology"/>
<reference key="1">
    <citation type="journal article" date="2002" name="J. Bacteriol.">
        <title>Whole-genome comparison of Mycobacterium tuberculosis clinical and laboratory strains.</title>
        <authorList>
            <person name="Fleischmann R.D."/>
            <person name="Alland D."/>
            <person name="Eisen J.A."/>
            <person name="Carpenter L."/>
            <person name="White O."/>
            <person name="Peterson J.D."/>
            <person name="DeBoy R.T."/>
            <person name="Dodson R.J."/>
            <person name="Gwinn M.L."/>
            <person name="Haft D.H."/>
            <person name="Hickey E.K."/>
            <person name="Kolonay J.F."/>
            <person name="Nelson W.C."/>
            <person name="Umayam L.A."/>
            <person name="Ermolaeva M.D."/>
            <person name="Salzberg S.L."/>
            <person name="Delcher A."/>
            <person name="Utterback T.R."/>
            <person name="Weidman J.F."/>
            <person name="Khouri H.M."/>
            <person name="Gill J."/>
            <person name="Mikula A."/>
            <person name="Bishai W."/>
            <person name="Jacobs W.R. Jr."/>
            <person name="Venter J.C."/>
            <person name="Fraser C.M."/>
        </authorList>
    </citation>
    <scope>NUCLEOTIDE SEQUENCE [LARGE SCALE GENOMIC DNA]</scope>
    <source>
        <strain>CDC 1551 / Oshkosh</strain>
    </source>
</reference>
<feature type="chain" id="PRO_0000426997" description="Phosphoenolpyruvate guanylyltransferase">
    <location>
        <begin position="1"/>
        <end position="214"/>
    </location>
</feature>
<feature type="binding site" evidence="1">
    <location>
        <position position="148"/>
    </location>
    <ligand>
        <name>phosphoenolpyruvate</name>
        <dbReference type="ChEBI" id="CHEBI:58702"/>
    </ligand>
</feature>
<feature type="binding site" evidence="1">
    <location>
        <position position="163"/>
    </location>
    <ligand>
        <name>phosphoenolpyruvate</name>
        <dbReference type="ChEBI" id="CHEBI:58702"/>
    </ligand>
</feature>
<feature type="binding site" evidence="1">
    <location>
        <position position="166"/>
    </location>
    <ligand>
        <name>phosphoenolpyruvate</name>
        <dbReference type="ChEBI" id="CHEBI:58702"/>
    </ligand>
</feature>
<protein>
    <recommendedName>
        <fullName evidence="1">Phosphoenolpyruvate guanylyltransferase</fullName>
        <shortName evidence="1">PEP guanylyltransferase</shortName>
        <ecNumber evidence="1">2.7.7.105</ecNumber>
    </recommendedName>
</protein>
<dbReference type="EC" id="2.7.7.105" evidence="1"/>
<dbReference type="EMBL" id="AE000516">
    <property type="protein sequence ID" value="AAK47390.1"/>
    <property type="molecule type" value="Genomic_DNA"/>
</dbReference>
<dbReference type="PIR" id="D70673">
    <property type="entry name" value="D70673"/>
</dbReference>
<dbReference type="SMR" id="P9WP82"/>
<dbReference type="KEGG" id="mtc:MT3061"/>
<dbReference type="PATRIC" id="fig|83331.31.peg.3304"/>
<dbReference type="HOGENOM" id="CLU_076569_0_0_11"/>
<dbReference type="UniPathway" id="UPA00071"/>
<dbReference type="Proteomes" id="UP000001020">
    <property type="component" value="Chromosome"/>
</dbReference>
<dbReference type="GO" id="GO:0005525">
    <property type="term" value="F:GTP binding"/>
    <property type="evidence" value="ECO:0007669"/>
    <property type="project" value="UniProtKB-KW"/>
</dbReference>
<dbReference type="GO" id="GO:0043814">
    <property type="term" value="F:phospholactate guanylyltransferase activity"/>
    <property type="evidence" value="ECO:0007669"/>
    <property type="project" value="InterPro"/>
</dbReference>
<dbReference type="GO" id="GO:0052645">
    <property type="term" value="P:F420-0 metabolic process"/>
    <property type="evidence" value="ECO:0007669"/>
    <property type="project" value="UniProtKB-UniRule"/>
</dbReference>
<dbReference type="FunFam" id="3.90.550.10:FF:000190">
    <property type="entry name" value="2-phospho-L-lactate guanylyltransferase"/>
    <property type="match status" value="1"/>
</dbReference>
<dbReference type="Gene3D" id="3.90.550.10">
    <property type="entry name" value="Spore Coat Polysaccharide Biosynthesis Protein SpsA, Chain A"/>
    <property type="match status" value="1"/>
</dbReference>
<dbReference type="HAMAP" id="MF_02114">
    <property type="entry name" value="CofC"/>
    <property type="match status" value="1"/>
</dbReference>
<dbReference type="InterPro" id="IPR002835">
    <property type="entry name" value="CofC"/>
</dbReference>
<dbReference type="InterPro" id="IPR029044">
    <property type="entry name" value="Nucleotide-diphossugar_trans"/>
</dbReference>
<dbReference type="NCBIfam" id="TIGR03552">
    <property type="entry name" value="F420_cofC"/>
    <property type="match status" value="1"/>
</dbReference>
<dbReference type="PANTHER" id="PTHR40392">
    <property type="entry name" value="2-PHOSPHO-L-LACTATE GUANYLYLTRANSFERASE"/>
    <property type="match status" value="1"/>
</dbReference>
<dbReference type="PANTHER" id="PTHR40392:SF1">
    <property type="entry name" value="2-PHOSPHO-L-LACTATE GUANYLYLTRANSFERASE"/>
    <property type="match status" value="1"/>
</dbReference>
<dbReference type="Pfam" id="PF01983">
    <property type="entry name" value="CofC"/>
    <property type="match status" value="1"/>
</dbReference>
<dbReference type="SUPFAM" id="SSF53448">
    <property type="entry name" value="Nucleotide-diphospho-sugar transferases"/>
    <property type="match status" value="1"/>
</dbReference>
<accession>P9WP82</accession>
<accession>L0TDZ2</accession>
<accession>P95112</accession>
<accession>Q7D6B3</accession>
<name>FBID_MYCTO</name>